<keyword id="KW-0002">3D-structure</keyword>
<keyword id="KW-0560">Oxidoreductase</keyword>
<keyword id="KW-1185">Reference proteome</keyword>
<accession>P9WJM5</accession>
<accession>L0T5N9</accession>
<accession>P0A5L0</accession>
<accession>P96814</accession>
<feature type="chain" id="PRO_0000138560" description="Peptide methionine sulfoxide reductase MsrA">
    <location>
        <begin position="1"/>
        <end position="182"/>
    </location>
</feature>
<feature type="active site" evidence="1">
    <location>
        <position position="13"/>
    </location>
</feature>
<feature type="strand" evidence="2">
    <location>
        <begin position="5"/>
        <end position="12"/>
    </location>
</feature>
<feature type="helix" evidence="2">
    <location>
        <begin position="14"/>
        <end position="21"/>
    </location>
</feature>
<feature type="strand" evidence="2">
    <location>
        <begin position="27"/>
        <end position="38"/>
    </location>
</feature>
<feature type="strand" evidence="2">
    <location>
        <begin position="51"/>
        <end position="58"/>
    </location>
</feature>
<feature type="turn" evidence="2">
    <location>
        <begin position="60"/>
        <end position="62"/>
    </location>
</feature>
<feature type="helix" evidence="2">
    <location>
        <begin position="65"/>
        <end position="75"/>
    </location>
</feature>
<feature type="strand" evidence="2">
    <location>
        <begin position="87"/>
        <end position="89"/>
    </location>
</feature>
<feature type="helix" evidence="2">
    <location>
        <begin position="90"/>
        <end position="92"/>
    </location>
</feature>
<feature type="strand" evidence="2">
    <location>
        <begin position="94"/>
        <end position="100"/>
    </location>
</feature>
<feature type="helix" evidence="2">
    <location>
        <begin position="101"/>
        <end position="117"/>
    </location>
</feature>
<feature type="strand" evidence="2">
    <location>
        <begin position="120"/>
        <end position="122"/>
    </location>
</feature>
<feature type="strand" evidence="2">
    <location>
        <begin position="127"/>
        <end position="130"/>
    </location>
</feature>
<feature type="strand" evidence="2">
    <location>
        <begin position="134"/>
        <end position="136"/>
    </location>
</feature>
<feature type="helix" evidence="2">
    <location>
        <begin position="139"/>
        <end position="141"/>
    </location>
</feature>
<feature type="helix" evidence="2">
    <location>
        <begin position="144"/>
        <end position="147"/>
    </location>
</feature>
<comment type="function">
    <text evidence="1">Has an important function as a repair enzyme for proteins that have been inactivated by oxidation. Catalyzes the reversible oxidation-reduction of methionine sulfoxide in proteins to methionine.</text>
</comment>
<comment type="catalytic activity">
    <reaction evidence="1">
        <text>L-methionyl-[protein] + [thioredoxin]-disulfide + H2O = L-methionyl-(S)-S-oxide-[protein] + [thioredoxin]-dithiol</text>
        <dbReference type="Rhea" id="RHEA:14217"/>
        <dbReference type="Rhea" id="RHEA-COMP:10698"/>
        <dbReference type="Rhea" id="RHEA-COMP:10700"/>
        <dbReference type="Rhea" id="RHEA-COMP:12313"/>
        <dbReference type="Rhea" id="RHEA-COMP:12315"/>
        <dbReference type="ChEBI" id="CHEBI:15377"/>
        <dbReference type="ChEBI" id="CHEBI:16044"/>
        <dbReference type="ChEBI" id="CHEBI:29950"/>
        <dbReference type="ChEBI" id="CHEBI:44120"/>
        <dbReference type="ChEBI" id="CHEBI:50058"/>
        <dbReference type="EC" id="1.8.4.11"/>
    </reaction>
</comment>
<comment type="catalytic activity">
    <reaction evidence="1">
        <text>[thioredoxin]-disulfide + L-methionine + H2O = L-methionine (S)-S-oxide + [thioredoxin]-dithiol</text>
        <dbReference type="Rhea" id="RHEA:19993"/>
        <dbReference type="Rhea" id="RHEA-COMP:10698"/>
        <dbReference type="Rhea" id="RHEA-COMP:10700"/>
        <dbReference type="ChEBI" id="CHEBI:15377"/>
        <dbReference type="ChEBI" id="CHEBI:29950"/>
        <dbReference type="ChEBI" id="CHEBI:50058"/>
        <dbReference type="ChEBI" id="CHEBI:57844"/>
        <dbReference type="ChEBI" id="CHEBI:58772"/>
        <dbReference type="EC" id="1.8.4.11"/>
    </reaction>
</comment>
<comment type="similarity">
    <text evidence="1">Belongs to the MsrA Met sulfoxide reductase family.</text>
</comment>
<reference key="1">
    <citation type="journal article" date="1998" name="Nature">
        <title>Deciphering the biology of Mycobacterium tuberculosis from the complete genome sequence.</title>
        <authorList>
            <person name="Cole S.T."/>
            <person name="Brosch R."/>
            <person name="Parkhill J."/>
            <person name="Garnier T."/>
            <person name="Churcher C.M."/>
            <person name="Harris D.E."/>
            <person name="Gordon S.V."/>
            <person name="Eiglmeier K."/>
            <person name="Gas S."/>
            <person name="Barry C.E. III"/>
            <person name="Tekaia F."/>
            <person name="Badcock K."/>
            <person name="Basham D."/>
            <person name="Brown D."/>
            <person name="Chillingworth T."/>
            <person name="Connor R."/>
            <person name="Davies R.M."/>
            <person name="Devlin K."/>
            <person name="Feltwell T."/>
            <person name="Gentles S."/>
            <person name="Hamlin N."/>
            <person name="Holroyd S."/>
            <person name="Hornsby T."/>
            <person name="Jagels K."/>
            <person name="Krogh A."/>
            <person name="McLean J."/>
            <person name="Moule S."/>
            <person name="Murphy L.D."/>
            <person name="Oliver S."/>
            <person name="Osborne J."/>
            <person name="Quail M.A."/>
            <person name="Rajandream M.A."/>
            <person name="Rogers J."/>
            <person name="Rutter S."/>
            <person name="Seeger K."/>
            <person name="Skelton S."/>
            <person name="Squares S."/>
            <person name="Squares R."/>
            <person name="Sulston J.E."/>
            <person name="Taylor K."/>
            <person name="Whitehead S."/>
            <person name="Barrell B.G."/>
        </authorList>
    </citation>
    <scope>NUCLEOTIDE SEQUENCE [LARGE SCALE GENOMIC DNA]</scope>
    <source>
        <strain>ATCC 25618 / H37Rv</strain>
    </source>
</reference>
<reference key="2">
    <citation type="journal article" date="2011" name="Mol. Cell. Proteomics">
        <title>Proteogenomic analysis of Mycobacterium tuberculosis by high resolution mass spectrometry.</title>
        <authorList>
            <person name="Kelkar D.S."/>
            <person name="Kumar D."/>
            <person name="Kumar P."/>
            <person name="Balakrishnan L."/>
            <person name="Muthusamy B."/>
            <person name="Yadav A.K."/>
            <person name="Shrivastava P."/>
            <person name="Marimuthu A."/>
            <person name="Anand S."/>
            <person name="Sundaram H."/>
            <person name="Kingsbury R."/>
            <person name="Harsha H.C."/>
            <person name="Nair B."/>
            <person name="Prasad T.S."/>
            <person name="Chauhan D.S."/>
            <person name="Katoch K."/>
            <person name="Katoch V.M."/>
            <person name="Kumar P."/>
            <person name="Chaerkady R."/>
            <person name="Ramachandran S."/>
            <person name="Dash D."/>
            <person name="Pandey A."/>
        </authorList>
    </citation>
    <scope>IDENTIFICATION BY MASS SPECTROMETRY [LARGE SCALE ANALYSIS]</scope>
    <source>
        <strain>ATCC 25618 / H37Rv</strain>
    </source>
</reference>
<evidence type="ECO:0000255" key="1">
    <source>
        <dbReference type="HAMAP-Rule" id="MF_01401"/>
    </source>
</evidence>
<evidence type="ECO:0007829" key="2">
    <source>
        <dbReference type="PDB" id="1NWA"/>
    </source>
</evidence>
<sequence>MTSNQKAILAGGCFWGLQDLIRNQPGVVSTRVGYSGGNIPNATYRNHGTHAEAVEIIFDPTVTDYRTLLEFFFQIHDPTTKDRQGNDRGTSYRSAIFYFDEQQKRIALDTIADVEASGLWPGKVVTEVSPAGDFWEAEPEHQDYLQRYPNGYTCHFVRPGWRLPRRTAESALRASLSPELGT</sequence>
<name>MSRA_MYCTU</name>
<organism>
    <name type="scientific">Mycobacterium tuberculosis (strain ATCC 25618 / H37Rv)</name>
    <dbReference type="NCBI Taxonomy" id="83332"/>
    <lineage>
        <taxon>Bacteria</taxon>
        <taxon>Bacillati</taxon>
        <taxon>Actinomycetota</taxon>
        <taxon>Actinomycetes</taxon>
        <taxon>Mycobacteriales</taxon>
        <taxon>Mycobacteriaceae</taxon>
        <taxon>Mycobacterium</taxon>
        <taxon>Mycobacterium tuberculosis complex</taxon>
    </lineage>
</organism>
<protein>
    <recommendedName>
        <fullName evidence="1">Peptide methionine sulfoxide reductase MsrA</fullName>
        <shortName evidence="1">Protein-methionine-S-oxide reductase</shortName>
        <ecNumber evidence="1">1.8.4.11</ecNumber>
    </recommendedName>
    <alternativeName>
        <fullName evidence="1">Peptide-methionine (S)-S-oxide reductase</fullName>
        <shortName evidence="1">Peptide Met(O) reductase</shortName>
    </alternativeName>
</protein>
<gene>
    <name evidence="1" type="primary">msrA</name>
    <name type="ordered locus">Rv0137c</name>
    <name type="ORF">MTCI5.11c</name>
</gene>
<proteinExistence type="evidence at protein level"/>
<dbReference type="EC" id="1.8.4.11" evidence="1"/>
<dbReference type="EMBL" id="AL123456">
    <property type="protein sequence ID" value="CCP42862.1"/>
    <property type="molecule type" value="Genomic_DNA"/>
</dbReference>
<dbReference type="PIR" id="D70616">
    <property type="entry name" value="D70616"/>
</dbReference>
<dbReference type="RefSeq" id="NP_214651.1">
    <property type="nucleotide sequence ID" value="NC_000962.3"/>
</dbReference>
<dbReference type="RefSeq" id="WP_003400942.1">
    <property type="nucleotide sequence ID" value="NZ_NVQJ01000001.1"/>
</dbReference>
<dbReference type="PDB" id="1NWA">
    <property type="method" value="X-ray"/>
    <property type="resolution" value="1.50 A"/>
    <property type="chains" value="A=1-182"/>
</dbReference>
<dbReference type="PDBsum" id="1NWA"/>
<dbReference type="SMR" id="P9WJM5"/>
<dbReference type="FunCoup" id="P9WJM5">
    <property type="interactions" value="434"/>
</dbReference>
<dbReference type="STRING" id="83332.Rv0137c"/>
<dbReference type="PaxDb" id="83332-Rv0137c"/>
<dbReference type="DNASU" id="886865"/>
<dbReference type="GeneID" id="45424103"/>
<dbReference type="GeneID" id="886865"/>
<dbReference type="KEGG" id="mtu:Rv0137c"/>
<dbReference type="KEGG" id="mtv:RVBD_0137c"/>
<dbReference type="TubercuList" id="Rv0137c"/>
<dbReference type="eggNOG" id="COG0225">
    <property type="taxonomic scope" value="Bacteria"/>
</dbReference>
<dbReference type="InParanoid" id="P9WJM5"/>
<dbReference type="OrthoDB" id="4174719at2"/>
<dbReference type="PhylomeDB" id="P9WJM5"/>
<dbReference type="BRENDA" id="1.8.4.11">
    <property type="organism ID" value="3445"/>
</dbReference>
<dbReference type="Reactome" id="R-HSA-1222538">
    <property type="pathway name" value="Tolerance by Mtb to nitric oxide produced by macrophages"/>
</dbReference>
<dbReference type="EvolutionaryTrace" id="P9WJM5"/>
<dbReference type="Proteomes" id="UP000001584">
    <property type="component" value="Chromosome"/>
</dbReference>
<dbReference type="GO" id="GO:0005737">
    <property type="term" value="C:cytoplasm"/>
    <property type="evidence" value="ECO:0000318"/>
    <property type="project" value="GO_Central"/>
</dbReference>
<dbReference type="GO" id="GO:0005829">
    <property type="term" value="C:cytosol"/>
    <property type="evidence" value="ECO:0000304"/>
    <property type="project" value="Reactome"/>
</dbReference>
<dbReference type="GO" id="GO:0036456">
    <property type="term" value="F:L-methionine-(S)-S-oxide reductase activity"/>
    <property type="evidence" value="ECO:0000318"/>
    <property type="project" value="GO_Central"/>
</dbReference>
<dbReference type="GO" id="GO:0033744">
    <property type="term" value="F:L-methionine:thioredoxin-disulfide S-oxidoreductase activity"/>
    <property type="evidence" value="ECO:0000314"/>
    <property type="project" value="MTBBASE"/>
</dbReference>
<dbReference type="GO" id="GO:0008113">
    <property type="term" value="F:peptide-methionine (S)-S-oxide reductase activity"/>
    <property type="evidence" value="ECO:0000314"/>
    <property type="project" value="MTBBASE"/>
</dbReference>
<dbReference type="GO" id="GO:0034599">
    <property type="term" value="P:cellular response to oxidative stress"/>
    <property type="evidence" value="ECO:0000318"/>
    <property type="project" value="GO_Central"/>
</dbReference>
<dbReference type="GO" id="GO:0036211">
    <property type="term" value="P:protein modification process"/>
    <property type="evidence" value="ECO:0007669"/>
    <property type="project" value="UniProtKB-UniRule"/>
</dbReference>
<dbReference type="GO" id="GO:0051409">
    <property type="term" value="P:response to nitrosative stress"/>
    <property type="evidence" value="ECO:0000315"/>
    <property type="project" value="MTBBASE"/>
</dbReference>
<dbReference type="GO" id="GO:0006979">
    <property type="term" value="P:response to oxidative stress"/>
    <property type="evidence" value="ECO:0000315"/>
    <property type="project" value="MTBBASE"/>
</dbReference>
<dbReference type="GO" id="GO:0141082">
    <property type="term" value="P:symbiont-mediated detoxification of host-generated reactive oxygen species"/>
    <property type="evidence" value="ECO:0000304"/>
    <property type="project" value="Reactome"/>
</dbReference>
<dbReference type="FunFam" id="3.30.1060.10:FF:000005">
    <property type="entry name" value="Peptide methionine sulfoxide reductase MsrA"/>
    <property type="match status" value="1"/>
</dbReference>
<dbReference type="Gene3D" id="3.30.1060.10">
    <property type="entry name" value="Peptide methionine sulphoxide reductase MsrA"/>
    <property type="match status" value="1"/>
</dbReference>
<dbReference type="HAMAP" id="MF_01401">
    <property type="entry name" value="MsrA"/>
    <property type="match status" value="1"/>
</dbReference>
<dbReference type="InterPro" id="IPR002569">
    <property type="entry name" value="Met_Sox_Rdtase_MsrA_dom"/>
</dbReference>
<dbReference type="InterPro" id="IPR036509">
    <property type="entry name" value="Met_Sox_Rdtase_MsrA_sf"/>
</dbReference>
<dbReference type="NCBIfam" id="TIGR00401">
    <property type="entry name" value="msrA"/>
    <property type="match status" value="1"/>
</dbReference>
<dbReference type="PANTHER" id="PTHR43774">
    <property type="entry name" value="PEPTIDE METHIONINE SULFOXIDE REDUCTASE"/>
    <property type="match status" value="1"/>
</dbReference>
<dbReference type="PANTHER" id="PTHR43774:SF1">
    <property type="entry name" value="PEPTIDE METHIONINE SULFOXIDE REDUCTASE MSRA 2"/>
    <property type="match status" value="1"/>
</dbReference>
<dbReference type="Pfam" id="PF01625">
    <property type="entry name" value="PMSR"/>
    <property type="match status" value="1"/>
</dbReference>
<dbReference type="SUPFAM" id="SSF55068">
    <property type="entry name" value="Peptide methionine sulfoxide reductase"/>
    <property type="match status" value="1"/>
</dbReference>